<keyword id="KW-0408">Iron</keyword>
<keyword id="KW-0411">Iron-sulfur</keyword>
<keyword id="KW-0479">Metal-binding</keyword>
<keyword id="KW-1185">Reference proteome</keyword>
<reference key="1">
    <citation type="journal article" date="2001" name="Nature">
        <title>Genome sequence of Yersinia pestis, the causative agent of plague.</title>
        <authorList>
            <person name="Parkhill J."/>
            <person name="Wren B.W."/>
            <person name="Thomson N.R."/>
            <person name="Titball R.W."/>
            <person name="Holden M.T.G."/>
            <person name="Prentice M.B."/>
            <person name="Sebaihia M."/>
            <person name="James K.D."/>
            <person name="Churcher C.M."/>
            <person name="Mungall K.L."/>
            <person name="Baker S."/>
            <person name="Basham D."/>
            <person name="Bentley S.D."/>
            <person name="Brooks K."/>
            <person name="Cerdeno-Tarraga A.-M."/>
            <person name="Chillingworth T."/>
            <person name="Cronin A."/>
            <person name="Davies R.M."/>
            <person name="Davis P."/>
            <person name="Dougan G."/>
            <person name="Feltwell T."/>
            <person name="Hamlin N."/>
            <person name="Holroyd S."/>
            <person name="Jagels K."/>
            <person name="Karlyshev A.V."/>
            <person name="Leather S."/>
            <person name="Moule S."/>
            <person name="Oyston P.C.F."/>
            <person name="Quail M.A."/>
            <person name="Rutherford K.M."/>
            <person name="Simmonds M."/>
            <person name="Skelton J."/>
            <person name="Stevens K."/>
            <person name="Whitehead S."/>
            <person name="Barrell B.G."/>
        </authorList>
    </citation>
    <scope>NUCLEOTIDE SEQUENCE [LARGE SCALE GENOMIC DNA]</scope>
    <source>
        <strain>CO-92 / Biovar Orientalis</strain>
    </source>
</reference>
<reference key="2">
    <citation type="journal article" date="2002" name="J. Bacteriol.">
        <title>Genome sequence of Yersinia pestis KIM.</title>
        <authorList>
            <person name="Deng W."/>
            <person name="Burland V."/>
            <person name="Plunkett G. III"/>
            <person name="Boutin A."/>
            <person name="Mayhew G.F."/>
            <person name="Liss P."/>
            <person name="Perna N.T."/>
            <person name="Rose D.J."/>
            <person name="Mau B."/>
            <person name="Zhou S."/>
            <person name="Schwartz D.C."/>
            <person name="Fetherston J.D."/>
            <person name="Lindler L.E."/>
            <person name="Brubaker R.R."/>
            <person name="Plano G.V."/>
            <person name="Straley S.C."/>
            <person name="McDonough K.A."/>
            <person name="Nilles M.L."/>
            <person name="Matson J.S."/>
            <person name="Blattner F.R."/>
            <person name="Perry R.D."/>
        </authorList>
    </citation>
    <scope>NUCLEOTIDE SEQUENCE [LARGE SCALE GENOMIC DNA]</scope>
    <source>
        <strain>KIM10+ / Biovar Mediaevalis</strain>
    </source>
</reference>
<reference key="3">
    <citation type="journal article" date="2004" name="DNA Res.">
        <title>Complete genome sequence of Yersinia pestis strain 91001, an isolate avirulent to humans.</title>
        <authorList>
            <person name="Song Y."/>
            <person name="Tong Z."/>
            <person name="Wang J."/>
            <person name="Wang L."/>
            <person name="Guo Z."/>
            <person name="Han Y."/>
            <person name="Zhang J."/>
            <person name="Pei D."/>
            <person name="Zhou D."/>
            <person name="Qin H."/>
            <person name="Pang X."/>
            <person name="Han Y."/>
            <person name="Zhai J."/>
            <person name="Li M."/>
            <person name="Cui B."/>
            <person name="Qi Z."/>
            <person name="Jin L."/>
            <person name="Dai R."/>
            <person name="Chen F."/>
            <person name="Li S."/>
            <person name="Ye C."/>
            <person name="Du Z."/>
            <person name="Lin W."/>
            <person name="Wang J."/>
            <person name="Yu J."/>
            <person name="Yang H."/>
            <person name="Wang J."/>
            <person name="Huang P."/>
            <person name="Yang R."/>
        </authorList>
    </citation>
    <scope>NUCLEOTIDE SEQUENCE [LARGE SCALE GENOMIC DNA]</scope>
    <source>
        <strain>91001 / Biovar Mediaevalis</strain>
    </source>
</reference>
<gene>
    <name evidence="1" type="primary">erpA</name>
    <name type="ordered locus">YPO3387</name>
    <name type="ordered locus">y0801</name>
    <name type="ordered locus">YP_0298</name>
</gene>
<feature type="chain" id="PRO_0000311582" description="Iron-sulfur cluster insertion protein ErpA">
    <location>
        <begin position="1"/>
        <end position="114"/>
    </location>
</feature>
<feature type="binding site" evidence="1">
    <location>
        <position position="42"/>
    </location>
    <ligand>
        <name>iron-sulfur cluster</name>
        <dbReference type="ChEBI" id="CHEBI:30408"/>
    </ligand>
</feature>
<feature type="binding site" evidence="1">
    <location>
        <position position="106"/>
    </location>
    <ligand>
        <name>iron-sulfur cluster</name>
        <dbReference type="ChEBI" id="CHEBI:30408"/>
    </ligand>
</feature>
<feature type="binding site" evidence="1">
    <location>
        <position position="108"/>
    </location>
    <ligand>
        <name>iron-sulfur cluster</name>
        <dbReference type="ChEBI" id="CHEBI:30408"/>
    </ligand>
</feature>
<accession>Q0WBQ9</accession>
<accession>Q74XT7</accession>
<accession>Q8D1A3</accession>
<evidence type="ECO:0000255" key="1">
    <source>
        <dbReference type="HAMAP-Rule" id="MF_01380"/>
    </source>
</evidence>
<evidence type="ECO:0000305" key="2"/>
<organism>
    <name type="scientific">Yersinia pestis</name>
    <dbReference type="NCBI Taxonomy" id="632"/>
    <lineage>
        <taxon>Bacteria</taxon>
        <taxon>Pseudomonadati</taxon>
        <taxon>Pseudomonadota</taxon>
        <taxon>Gammaproteobacteria</taxon>
        <taxon>Enterobacterales</taxon>
        <taxon>Yersiniaceae</taxon>
        <taxon>Yersinia</taxon>
    </lineage>
</organism>
<sequence>MSNETVLPLQFTEAAAKKVKLLISDEENPNLKLRVYITGGGCSGFQYGFTFDDQVNDGDMTIEKQGVELVVDPMSLQYLVGGAVDYTEGLEGSRFIVTNPNAKSTCGCGSSFSI</sequence>
<proteinExistence type="inferred from homology"/>
<comment type="function">
    <text evidence="1">Required for insertion of 4Fe-4S clusters for at least IspG.</text>
</comment>
<comment type="cofactor">
    <cofactor evidence="1">
        <name>iron-sulfur cluster</name>
        <dbReference type="ChEBI" id="CHEBI:30408"/>
    </cofactor>
    <text evidence="1">Binds 1 iron-sulfur cluster per subunit.</text>
</comment>
<comment type="subunit">
    <text evidence="1">Homodimer.</text>
</comment>
<comment type="similarity">
    <text evidence="1">Belongs to the HesB/IscA family.</text>
</comment>
<comment type="sequence caution" evidence="2">
    <conflict type="erroneous initiation">
        <sequence resource="EMBL-CDS" id="AAM84388"/>
    </conflict>
</comment>
<comment type="sequence caution" evidence="2">
    <conflict type="erroneous initiation">
        <sequence resource="EMBL-CDS" id="AAS60573"/>
    </conflict>
</comment>
<protein>
    <recommendedName>
        <fullName evidence="1">Iron-sulfur cluster insertion protein ErpA</fullName>
    </recommendedName>
</protein>
<name>ERPA_YERPE</name>
<dbReference type="EMBL" id="AL590842">
    <property type="protein sequence ID" value="CAL21976.1"/>
    <property type="molecule type" value="Genomic_DNA"/>
</dbReference>
<dbReference type="EMBL" id="AE009952">
    <property type="protein sequence ID" value="AAM84388.1"/>
    <property type="status" value="ALT_INIT"/>
    <property type="molecule type" value="Genomic_DNA"/>
</dbReference>
<dbReference type="EMBL" id="AE017042">
    <property type="protein sequence ID" value="AAS60573.1"/>
    <property type="status" value="ALT_INIT"/>
    <property type="molecule type" value="Genomic_DNA"/>
</dbReference>
<dbReference type="PIR" id="AE0411">
    <property type="entry name" value="AE0411"/>
</dbReference>
<dbReference type="RefSeq" id="WP_002209365.1">
    <property type="nucleotide sequence ID" value="NZ_WUCM01000008.1"/>
</dbReference>
<dbReference type="RefSeq" id="YP_002348279.1">
    <property type="nucleotide sequence ID" value="NC_003143.1"/>
</dbReference>
<dbReference type="SMR" id="Q0WBQ9"/>
<dbReference type="STRING" id="214092.YPO3387"/>
<dbReference type="PaxDb" id="214092-YPO3387"/>
<dbReference type="DNASU" id="1145748"/>
<dbReference type="EnsemblBacteria" id="AAS60573">
    <property type="protein sequence ID" value="AAS60573"/>
    <property type="gene ID" value="YP_0298"/>
</dbReference>
<dbReference type="GeneID" id="96664241"/>
<dbReference type="KEGG" id="ype:YPO3387"/>
<dbReference type="KEGG" id="ypk:y0801"/>
<dbReference type="KEGG" id="ypm:YP_0298"/>
<dbReference type="PATRIC" id="fig|214092.21.peg.3868"/>
<dbReference type="eggNOG" id="COG0316">
    <property type="taxonomic scope" value="Bacteria"/>
</dbReference>
<dbReference type="HOGENOM" id="CLU_069054_5_3_6"/>
<dbReference type="OMA" id="LYIYGMQ"/>
<dbReference type="OrthoDB" id="9801228at2"/>
<dbReference type="Proteomes" id="UP000000815">
    <property type="component" value="Chromosome"/>
</dbReference>
<dbReference type="Proteomes" id="UP000001019">
    <property type="component" value="Chromosome"/>
</dbReference>
<dbReference type="Proteomes" id="UP000002490">
    <property type="component" value="Chromosome"/>
</dbReference>
<dbReference type="GO" id="GO:0005829">
    <property type="term" value="C:cytosol"/>
    <property type="evidence" value="ECO:0000318"/>
    <property type="project" value="GO_Central"/>
</dbReference>
<dbReference type="GO" id="GO:0051537">
    <property type="term" value="F:2 iron, 2 sulfur cluster binding"/>
    <property type="evidence" value="ECO:0000318"/>
    <property type="project" value="GO_Central"/>
</dbReference>
<dbReference type="GO" id="GO:0051539">
    <property type="term" value="F:4 iron, 4 sulfur cluster binding"/>
    <property type="evidence" value="ECO:0000318"/>
    <property type="project" value="GO_Central"/>
</dbReference>
<dbReference type="GO" id="GO:0005506">
    <property type="term" value="F:iron ion binding"/>
    <property type="evidence" value="ECO:0000318"/>
    <property type="project" value="GO_Central"/>
</dbReference>
<dbReference type="GO" id="GO:0016226">
    <property type="term" value="P:iron-sulfur cluster assembly"/>
    <property type="evidence" value="ECO:0000318"/>
    <property type="project" value="GO_Central"/>
</dbReference>
<dbReference type="FunFam" id="2.60.300.12:FF:000002">
    <property type="entry name" value="Iron-sulfur cluster insertion protein ErpA"/>
    <property type="match status" value="1"/>
</dbReference>
<dbReference type="Gene3D" id="2.60.300.12">
    <property type="entry name" value="HesB-like domain"/>
    <property type="match status" value="1"/>
</dbReference>
<dbReference type="HAMAP" id="MF_01380">
    <property type="entry name" value="Fe_S_insert_ErpA"/>
    <property type="match status" value="1"/>
</dbReference>
<dbReference type="InterPro" id="IPR000361">
    <property type="entry name" value="FeS_biogenesis"/>
</dbReference>
<dbReference type="InterPro" id="IPR016092">
    <property type="entry name" value="FeS_cluster_insertion"/>
</dbReference>
<dbReference type="InterPro" id="IPR017870">
    <property type="entry name" value="FeS_cluster_insertion_CS"/>
</dbReference>
<dbReference type="InterPro" id="IPR023063">
    <property type="entry name" value="FeS_cluster_insertion_RrpA"/>
</dbReference>
<dbReference type="InterPro" id="IPR035903">
    <property type="entry name" value="HesB-like_dom_sf"/>
</dbReference>
<dbReference type="NCBIfam" id="TIGR00049">
    <property type="entry name" value="iron-sulfur cluster assembly accessory protein"/>
    <property type="match status" value="1"/>
</dbReference>
<dbReference type="NCBIfam" id="NF010147">
    <property type="entry name" value="PRK13623.1"/>
    <property type="match status" value="1"/>
</dbReference>
<dbReference type="PANTHER" id="PTHR43011">
    <property type="entry name" value="IRON-SULFUR CLUSTER ASSEMBLY 2 HOMOLOG, MITOCHONDRIAL"/>
    <property type="match status" value="1"/>
</dbReference>
<dbReference type="PANTHER" id="PTHR43011:SF1">
    <property type="entry name" value="IRON-SULFUR CLUSTER ASSEMBLY 2 HOMOLOG, MITOCHONDRIAL"/>
    <property type="match status" value="1"/>
</dbReference>
<dbReference type="Pfam" id="PF01521">
    <property type="entry name" value="Fe-S_biosyn"/>
    <property type="match status" value="1"/>
</dbReference>
<dbReference type="SUPFAM" id="SSF89360">
    <property type="entry name" value="HesB-like domain"/>
    <property type="match status" value="1"/>
</dbReference>
<dbReference type="PROSITE" id="PS01152">
    <property type="entry name" value="HESB"/>
    <property type="match status" value="1"/>
</dbReference>